<comment type="function">
    <text evidence="1">Protein S19 forms a complex with S13 that binds strongly to the 16S ribosomal RNA.</text>
</comment>
<comment type="similarity">
    <text evidence="1">Belongs to the universal ribosomal protein uS19 family.</text>
</comment>
<evidence type="ECO:0000255" key="1">
    <source>
        <dbReference type="HAMAP-Rule" id="MF_00531"/>
    </source>
</evidence>
<evidence type="ECO:0000305" key="2"/>
<organism>
    <name type="scientific">Parasynechococcus marenigrum (strain WH8102)</name>
    <dbReference type="NCBI Taxonomy" id="84588"/>
    <lineage>
        <taxon>Bacteria</taxon>
        <taxon>Bacillati</taxon>
        <taxon>Cyanobacteriota</taxon>
        <taxon>Cyanophyceae</taxon>
        <taxon>Synechococcales</taxon>
        <taxon>Prochlorococcaceae</taxon>
        <taxon>Parasynechococcus</taxon>
        <taxon>Parasynechococcus marenigrum</taxon>
    </lineage>
</organism>
<dbReference type="EMBL" id="BX569694">
    <property type="protein sequence ID" value="CAE08586.1"/>
    <property type="molecule type" value="Genomic_DNA"/>
</dbReference>
<dbReference type="RefSeq" id="WP_011128929.1">
    <property type="nucleotide sequence ID" value="NC_005070.1"/>
</dbReference>
<dbReference type="SMR" id="Q7U4J6"/>
<dbReference type="STRING" id="84588.SYNW2071"/>
<dbReference type="KEGG" id="syw:SYNW2071"/>
<dbReference type="eggNOG" id="COG0185">
    <property type="taxonomic scope" value="Bacteria"/>
</dbReference>
<dbReference type="HOGENOM" id="CLU_144911_0_1_3"/>
<dbReference type="Proteomes" id="UP000001422">
    <property type="component" value="Chromosome"/>
</dbReference>
<dbReference type="GO" id="GO:0005737">
    <property type="term" value="C:cytoplasm"/>
    <property type="evidence" value="ECO:0007669"/>
    <property type="project" value="UniProtKB-ARBA"/>
</dbReference>
<dbReference type="GO" id="GO:0015935">
    <property type="term" value="C:small ribosomal subunit"/>
    <property type="evidence" value="ECO:0007669"/>
    <property type="project" value="InterPro"/>
</dbReference>
<dbReference type="GO" id="GO:0019843">
    <property type="term" value="F:rRNA binding"/>
    <property type="evidence" value="ECO:0007669"/>
    <property type="project" value="UniProtKB-UniRule"/>
</dbReference>
<dbReference type="GO" id="GO:0003735">
    <property type="term" value="F:structural constituent of ribosome"/>
    <property type="evidence" value="ECO:0007669"/>
    <property type="project" value="InterPro"/>
</dbReference>
<dbReference type="GO" id="GO:0000028">
    <property type="term" value="P:ribosomal small subunit assembly"/>
    <property type="evidence" value="ECO:0007669"/>
    <property type="project" value="TreeGrafter"/>
</dbReference>
<dbReference type="GO" id="GO:0006412">
    <property type="term" value="P:translation"/>
    <property type="evidence" value="ECO:0007669"/>
    <property type="project" value="UniProtKB-UniRule"/>
</dbReference>
<dbReference type="FunFam" id="3.30.860.10:FF:000001">
    <property type="entry name" value="30S ribosomal protein S19"/>
    <property type="match status" value="1"/>
</dbReference>
<dbReference type="Gene3D" id="3.30.860.10">
    <property type="entry name" value="30s Ribosomal Protein S19, Chain A"/>
    <property type="match status" value="1"/>
</dbReference>
<dbReference type="HAMAP" id="MF_00531">
    <property type="entry name" value="Ribosomal_uS19"/>
    <property type="match status" value="1"/>
</dbReference>
<dbReference type="InterPro" id="IPR002222">
    <property type="entry name" value="Ribosomal_uS19"/>
</dbReference>
<dbReference type="InterPro" id="IPR005732">
    <property type="entry name" value="Ribosomal_uS19_bac-type"/>
</dbReference>
<dbReference type="InterPro" id="IPR020934">
    <property type="entry name" value="Ribosomal_uS19_CS"/>
</dbReference>
<dbReference type="InterPro" id="IPR023575">
    <property type="entry name" value="Ribosomal_uS19_SF"/>
</dbReference>
<dbReference type="NCBIfam" id="TIGR01050">
    <property type="entry name" value="rpsS_bact"/>
    <property type="match status" value="1"/>
</dbReference>
<dbReference type="PANTHER" id="PTHR11880">
    <property type="entry name" value="RIBOSOMAL PROTEIN S19P FAMILY MEMBER"/>
    <property type="match status" value="1"/>
</dbReference>
<dbReference type="PANTHER" id="PTHR11880:SF8">
    <property type="entry name" value="SMALL RIBOSOMAL SUBUNIT PROTEIN US19M"/>
    <property type="match status" value="1"/>
</dbReference>
<dbReference type="Pfam" id="PF00203">
    <property type="entry name" value="Ribosomal_S19"/>
    <property type="match status" value="1"/>
</dbReference>
<dbReference type="PIRSF" id="PIRSF002144">
    <property type="entry name" value="Ribosomal_S19"/>
    <property type="match status" value="1"/>
</dbReference>
<dbReference type="PRINTS" id="PR00975">
    <property type="entry name" value="RIBOSOMALS19"/>
</dbReference>
<dbReference type="SUPFAM" id="SSF54570">
    <property type="entry name" value="Ribosomal protein S19"/>
    <property type="match status" value="1"/>
</dbReference>
<dbReference type="PROSITE" id="PS00323">
    <property type="entry name" value="RIBOSOMAL_S19"/>
    <property type="match status" value="1"/>
</dbReference>
<accession>Q7U4J6</accession>
<name>RS19_PARMW</name>
<reference key="1">
    <citation type="journal article" date="2003" name="Nature">
        <title>The genome of a motile marine Synechococcus.</title>
        <authorList>
            <person name="Palenik B."/>
            <person name="Brahamsha B."/>
            <person name="Larimer F.W."/>
            <person name="Land M.L."/>
            <person name="Hauser L."/>
            <person name="Chain P."/>
            <person name="Lamerdin J.E."/>
            <person name="Regala W."/>
            <person name="Allen E.E."/>
            <person name="McCarren J."/>
            <person name="Paulsen I.T."/>
            <person name="Dufresne A."/>
            <person name="Partensky F."/>
            <person name="Webb E.A."/>
            <person name="Waterbury J."/>
        </authorList>
    </citation>
    <scope>NUCLEOTIDE SEQUENCE [LARGE SCALE GENOMIC DNA]</scope>
    <source>
        <strain>WH8102</strain>
    </source>
</reference>
<sequence length="91" mass="10139">MGRSLKKGPFIADSLLRKVEKQNDTDDKSVIKTWSRASTILPMMIGHTIAVHNGKSHVPVFITEQMVGHKLGEFAPTRTFKGHIKDKKGGR</sequence>
<protein>
    <recommendedName>
        <fullName evidence="1">Small ribosomal subunit protein uS19</fullName>
    </recommendedName>
    <alternativeName>
        <fullName evidence="2">30S ribosomal protein S19</fullName>
    </alternativeName>
</protein>
<proteinExistence type="inferred from homology"/>
<gene>
    <name evidence="1" type="primary">rpsS</name>
    <name evidence="1" type="synonym">rps19</name>
    <name type="ordered locus">SYNW2071</name>
</gene>
<keyword id="KW-0687">Ribonucleoprotein</keyword>
<keyword id="KW-0689">Ribosomal protein</keyword>
<keyword id="KW-0694">RNA-binding</keyword>
<keyword id="KW-0699">rRNA-binding</keyword>
<feature type="chain" id="PRO_0000129923" description="Small ribosomal subunit protein uS19">
    <location>
        <begin position="1"/>
        <end position="91"/>
    </location>
</feature>